<reference key="1">
    <citation type="journal article" date="2001" name="Nature">
        <title>Complete genome sequence of a multiple drug resistant Salmonella enterica serovar Typhi CT18.</title>
        <authorList>
            <person name="Parkhill J."/>
            <person name="Dougan G."/>
            <person name="James K.D."/>
            <person name="Thomson N.R."/>
            <person name="Pickard D."/>
            <person name="Wain J."/>
            <person name="Churcher C.M."/>
            <person name="Mungall K.L."/>
            <person name="Bentley S.D."/>
            <person name="Holden M.T.G."/>
            <person name="Sebaihia M."/>
            <person name="Baker S."/>
            <person name="Basham D."/>
            <person name="Brooks K."/>
            <person name="Chillingworth T."/>
            <person name="Connerton P."/>
            <person name="Cronin A."/>
            <person name="Davis P."/>
            <person name="Davies R.M."/>
            <person name="Dowd L."/>
            <person name="White N."/>
            <person name="Farrar J."/>
            <person name="Feltwell T."/>
            <person name="Hamlin N."/>
            <person name="Haque A."/>
            <person name="Hien T.T."/>
            <person name="Holroyd S."/>
            <person name="Jagels K."/>
            <person name="Krogh A."/>
            <person name="Larsen T.S."/>
            <person name="Leather S."/>
            <person name="Moule S."/>
            <person name="O'Gaora P."/>
            <person name="Parry C."/>
            <person name="Quail M.A."/>
            <person name="Rutherford K.M."/>
            <person name="Simmonds M."/>
            <person name="Skelton J."/>
            <person name="Stevens K."/>
            <person name="Whitehead S."/>
            <person name="Barrell B.G."/>
        </authorList>
    </citation>
    <scope>NUCLEOTIDE SEQUENCE [LARGE SCALE GENOMIC DNA]</scope>
    <source>
        <strain>CT18</strain>
    </source>
</reference>
<reference key="2">
    <citation type="journal article" date="2003" name="J. Bacteriol.">
        <title>Comparative genomics of Salmonella enterica serovar Typhi strains Ty2 and CT18.</title>
        <authorList>
            <person name="Deng W."/>
            <person name="Liou S.-R."/>
            <person name="Plunkett G. III"/>
            <person name="Mayhew G.F."/>
            <person name="Rose D.J."/>
            <person name="Burland V."/>
            <person name="Kodoyianni V."/>
            <person name="Schwartz D.C."/>
            <person name="Blattner F.R."/>
        </authorList>
    </citation>
    <scope>NUCLEOTIDE SEQUENCE [LARGE SCALE GENOMIC DNA]</scope>
    <source>
        <strain>ATCC 700931 / Ty2</strain>
    </source>
</reference>
<proteinExistence type="inferred from homology"/>
<accession>Q8Z2R4</accession>
<accession>Q7C6J5</accession>
<gene>
    <name evidence="1" type="primary">rbsA</name>
    <name type="ordered locus">STY3896</name>
    <name type="ordered locus">t3637</name>
</gene>
<organism>
    <name type="scientific">Salmonella typhi</name>
    <dbReference type="NCBI Taxonomy" id="90370"/>
    <lineage>
        <taxon>Bacteria</taxon>
        <taxon>Pseudomonadati</taxon>
        <taxon>Pseudomonadota</taxon>
        <taxon>Gammaproteobacteria</taxon>
        <taxon>Enterobacterales</taxon>
        <taxon>Enterobacteriaceae</taxon>
        <taxon>Salmonella</taxon>
    </lineage>
</organism>
<name>RBSA_SALTI</name>
<dbReference type="EC" id="7.5.2.7" evidence="1"/>
<dbReference type="EMBL" id="AL513382">
    <property type="protein sequence ID" value="CAD03113.1"/>
    <property type="molecule type" value="Genomic_DNA"/>
</dbReference>
<dbReference type="EMBL" id="AE014613">
    <property type="protein sequence ID" value="AAO71134.1"/>
    <property type="molecule type" value="Genomic_DNA"/>
</dbReference>
<dbReference type="RefSeq" id="NP_458061.1">
    <property type="nucleotide sequence ID" value="NC_003198.1"/>
</dbReference>
<dbReference type="RefSeq" id="WP_000339360.1">
    <property type="nucleotide sequence ID" value="NZ_WSUR01000023.1"/>
</dbReference>
<dbReference type="SMR" id="Q8Z2R4"/>
<dbReference type="STRING" id="220341.gene:17587756"/>
<dbReference type="KEGG" id="stt:t3637"/>
<dbReference type="KEGG" id="sty:STY3896"/>
<dbReference type="PATRIC" id="fig|220341.7.peg.3976"/>
<dbReference type="eggNOG" id="COG1129">
    <property type="taxonomic scope" value="Bacteria"/>
</dbReference>
<dbReference type="HOGENOM" id="CLU_000604_92_3_6"/>
<dbReference type="OMA" id="KWIGIGP"/>
<dbReference type="OrthoDB" id="9776369at2"/>
<dbReference type="Proteomes" id="UP000000541">
    <property type="component" value="Chromosome"/>
</dbReference>
<dbReference type="Proteomes" id="UP000002670">
    <property type="component" value="Chromosome"/>
</dbReference>
<dbReference type="GO" id="GO:0005886">
    <property type="term" value="C:plasma membrane"/>
    <property type="evidence" value="ECO:0007669"/>
    <property type="project" value="UniProtKB-SubCell"/>
</dbReference>
<dbReference type="GO" id="GO:0015611">
    <property type="term" value="F:ABC-type D-ribose transporter activity"/>
    <property type="evidence" value="ECO:0007669"/>
    <property type="project" value="UniProtKB-EC"/>
</dbReference>
<dbReference type="GO" id="GO:0005524">
    <property type="term" value="F:ATP binding"/>
    <property type="evidence" value="ECO:0007669"/>
    <property type="project" value="UniProtKB-KW"/>
</dbReference>
<dbReference type="GO" id="GO:0016887">
    <property type="term" value="F:ATP hydrolysis activity"/>
    <property type="evidence" value="ECO:0007669"/>
    <property type="project" value="InterPro"/>
</dbReference>
<dbReference type="CDD" id="cd03216">
    <property type="entry name" value="ABC_Carb_Monos_I"/>
    <property type="match status" value="1"/>
</dbReference>
<dbReference type="CDD" id="cd03215">
    <property type="entry name" value="ABC_Carb_Monos_II"/>
    <property type="match status" value="1"/>
</dbReference>
<dbReference type="FunFam" id="3.40.50.300:FF:000126">
    <property type="entry name" value="Galactose/methyl galactoside import ATP-binding protein MglA"/>
    <property type="match status" value="1"/>
</dbReference>
<dbReference type="FunFam" id="3.40.50.300:FF:000127">
    <property type="entry name" value="Ribose import ATP-binding protein RbsA"/>
    <property type="match status" value="1"/>
</dbReference>
<dbReference type="Gene3D" id="3.40.50.300">
    <property type="entry name" value="P-loop containing nucleotide triphosphate hydrolases"/>
    <property type="match status" value="2"/>
</dbReference>
<dbReference type="InterPro" id="IPR003593">
    <property type="entry name" value="AAA+_ATPase"/>
</dbReference>
<dbReference type="InterPro" id="IPR050107">
    <property type="entry name" value="ABC_carbohydrate_import_ATPase"/>
</dbReference>
<dbReference type="InterPro" id="IPR003439">
    <property type="entry name" value="ABC_transporter-like_ATP-bd"/>
</dbReference>
<dbReference type="InterPro" id="IPR017871">
    <property type="entry name" value="ABC_transporter-like_CS"/>
</dbReference>
<dbReference type="InterPro" id="IPR027417">
    <property type="entry name" value="P-loop_NTPase"/>
</dbReference>
<dbReference type="NCBIfam" id="NF008030">
    <property type="entry name" value="PRK10762.1"/>
    <property type="match status" value="1"/>
</dbReference>
<dbReference type="PANTHER" id="PTHR43790">
    <property type="entry name" value="CARBOHYDRATE TRANSPORT ATP-BINDING PROTEIN MG119-RELATED"/>
    <property type="match status" value="1"/>
</dbReference>
<dbReference type="PANTHER" id="PTHR43790:SF3">
    <property type="entry name" value="D-ALLOSE IMPORT ATP-BINDING PROTEIN ALSA-RELATED"/>
    <property type="match status" value="1"/>
</dbReference>
<dbReference type="Pfam" id="PF00005">
    <property type="entry name" value="ABC_tran"/>
    <property type="match status" value="2"/>
</dbReference>
<dbReference type="SMART" id="SM00382">
    <property type="entry name" value="AAA"/>
    <property type="match status" value="2"/>
</dbReference>
<dbReference type="SUPFAM" id="SSF52540">
    <property type="entry name" value="P-loop containing nucleoside triphosphate hydrolases"/>
    <property type="match status" value="2"/>
</dbReference>
<dbReference type="PROSITE" id="PS00211">
    <property type="entry name" value="ABC_TRANSPORTER_1"/>
    <property type="match status" value="1"/>
</dbReference>
<dbReference type="PROSITE" id="PS50893">
    <property type="entry name" value="ABC_TRANSPORTER_2"/>
    <property type="match status" value="1"/>
</dbReference>
<dbReference type="PROSITE" id="PS51254">
    <property type="entry name" value="RBSA"/>
    <property type="match status" value="1"/>
</dbReference>
<evidence type="ECO:0000255" key="1">
    <source>
        <dbReference type="HAMAP-Rule" id="MF_01716"/>
    </source>
</evidence>
<comment type="function">
    <text evidence="1">Part of the ABC transporter complex RbsABC involved in ribose import. Responsible for energy coupling to the transport system.</text>
</comment>
<comment type="catalytic activity">
    <reaction evidence="1">
        <text>D-ribose(out) + ATP + H2O = D-ribose(in) + ADP + phosphate + H(+)</text>
        <dbReference type="Rhea" id="RHEA:29903"/>
        <dbReference type="ChEBI" id="CHEBI:15377"/>
        <dbReference type="ChEBI" id="CHEBI:15378"/>
        <dbReference type="ChEBI" id="CHEBI:30616"/>
        <dbReference type="ChEBI" id="CHEBI:43474"/>
        <dbReference type="ChEBI" id="CHEBI:47013"/>
        <dbReference type="ChEBI" id="CHEBI:456216"/>
        <dbReference type="EC" id="7.5.2.7"/>
    </reaction>
</comment>
<comment type="subunit">
    <text evidence="1">The complex is composed of an ATP-binding protein (RbsA), two transmembrane proteins (RbsC) and a solute-binding protein (RbsB).</text>
</comment>
<comment type="subcellular location">
    <subcellularLocation>
        <location evidence="1">Cell inner membrane</location>
        <topology evidence="1">Peripheral membrane protein</topology>
    </subcellularLocation>
</comment>
<comment type="similarity">
    <text evidence="1">Belongs to the ABC transporter superfamily. Ribose importer (TC 3.A.1.2.1) family.</text>
</comment>
<sequence length="501" mass="55137">MDALLQLKGIDKAFPGVKALSGAALNVYPGRVMALVGENGAGKSTMMKVLTGIYTRDAGSLLWLGKETTFNGPKSSQEAGIGIIHQELNLIPQLTIAENIFLGREFVNRFGKIDWKKMYAEADHLLAKLNLRFKSDKLVGELSIGDQQMVEIAKVLSFESKVIIMDEPTDALTDTETDSLFRVIRELKSQGRGIVYISHRMKEIFEICDDVTVFRDGQFIAEREVATLTEDSLIEMMVGRKLEDQYPHLDNAPGEIRLKVDNLCGPGVNDVSFVLRKGEILGISGLMGTGRTELMKVLYGAMPRTSGYVTLEGHEVVTRSPQDGLANGIVYISEDRKRDGLVLGMSVKENMSLTALDYFSRAGGSLKHKDEQQAVGDFIRLFNVKTPSMEQAIGLLSGGNQQKVAIARGLMTRPKVLILDEPTRGVDVGAKKEIYQLINQFKADGLSIILVSSEMPEVLGMSDRIIVMHEGHLSGEFTREQATQEVLMAAAVGKLNRVNQE</sequence>
<keyword id="KW-0067">ATP-binding</keyword>
<keyword id="KW-0997">Cell inner membrane</keyword>
<keyword id="KW-1003">Cell membrane</keyword>
<keyword id="KW-0472">Membrane</keyword>
<keyword id="KW-0547">Nucleotide-binding</keyword>
<keyword id="KW-0677">Repeat</keyword>
<keyword id="KW-0762">Sugar transport</keyword>
<keyword id="KW-1278">Translocase</keyword>
<keyword id="KW-0813">Transport</keyword>
<feature type="chain" id="PRO_0000261100" description="Ribose import ATP-binding protein RbsA">
    <location>
        <begin position="1"/>
        <end position="501"/>
    </location>
</feature>
<feature type="domain" description="ABC transporter 1" evidence="1">
    <location>
        <begin position="5"/>
        <end position="241"/>
    </location>
</feature>
<feature type="domain" description="ABC transporter 2" evidence="1">
    <location>
        <begin position="252"/>
        <end position="495"/>
    </location>
</feature>
<feature type="binding site" evidence="1">
    <location>
        <begin position="37"/>
        <end position="44"/>
    </location>
    <ligand>
        <name>ATP</name>
        <dbReference type="ChEBI" id="CHEBI:30616"/>
    </ligand>
</feature>
<protein>
    <recommendedName>
        <fullName evidence="1">Ribose import ATP-binding protein RbsA</fullName>
        <ecNumber evidence="1">7.5.2.7</ecNumber>
    </recommendedName>
</protein>